<feature type="chain" id="PRO_0000328913" description="UPF0213 protein YhbQ">
    <location>
        <begin position="1"/>
        <end position="100"/>
    </location>
</feature>
<feature type="domain" description="GIY-YIG" evidence="1">
    <location>
        <begin position="2"/>
        <end position="77"/>
    </location>
</feature>
<organism>
    <name type="scientific">Salmonella paratyphi B (strain ATCC BAA-1250 / SPB7)</name>
    <dbReference type="NCBI Taxonomy" id="1016998"/>
    <lineage>
        <taxon>Bacteria</taxon>
        <taxon>Pseudomonadati</taxon>
        <taxon>Pseudomonadota</taxon>
        <taxon>Gammaproteobacteria</taxon>
        <taxon>Enterobacterales</taxon>
        <taxon>Enterobacteriaceae</taxon>
        <taxon>Salmonella</taxon>
    </lineage>
</organism>
<protein>
    <recommendedName>
        <fullName evidence="1">UPF0213 protein YhbQ</fullName>
    </recommendedName>
</protein>
<dbReference type="EMBL" id="CP000886">
    <property type="protein sequence ID" value="ABX69408.1"/>
    <property type="status" value="ALT_INIT"/>
    <property type="molecule type" value="Genomic_DNA"/>
</dbReference>
<dbReference type="SMR" id="A9N717"/>
<dbReference type="KEGG" id="spq:SPAB_04081"/>
<dbReference type="PATRIC" id="fig|1016998.12.peg.3846"/>
<dbReference type="HOGENOM" id="CLU_135650_0_1_6"/>
<dbReference type="Proteomes" id="UP000008556">
    <property type="component" value="Chromosome"/>
</dbReference>
<dbReference type="CDD" id="cd10456">
    <property type="entry name" value="GIY-YIG_UPF0213"/>
    <property type="match status" value="1"/>
</dbReference>
<dbReference type="Gene3D" id="3.40.1440.10">
    <property type="entry name" value="GIY-YIG endonuclease"/>
    <property type="match status" value="1"/>
</dbReference>
<dbReference type="HAMAP" id="MF_01029">
    <property type="entry name" value="UPF0213"/>
    <property type="match status" value="1"/>
</dbReference>
<dbReference type="InterPro" id="IPR000305">
    <property type="entry name" value="GIY-YIG_endonuc"/>
</dbReference>
<dbReference type="InterPro" id="IPR035901">
    <property type="entry name" value="GIY-YIG_endonuc_sf"/>
</dbReference>
<dbReference type="InterPro" id="IPR050190">
    <property type="entry name" value="UPF0213_domain"/>
</dbReference>
<dbReference type="InterPro" id="IPR022992">
    <property type="entry name" value="UPF0213_GIY-YIG_endonuc"/>
</dbReference>
<dbReference type="PANTHER" id="PTHR34477">
    <property type="entry name" value="UPF0213 PROTEIN YHBQ"/>
    <property type="match status" value="1"/>
</dbReference>
<dbReference type="PANTHER" id="PTHR34477:SF1">
    <property type="entry name" value="UPF0213 PROTEIN YHBQ"/>
    <property type="match status" value="1"/>
</dbReference>
<dbReference type="Pfam" id="PF01541">
    <property type="entry name" value="GIY-YIG"/>
    <property type="match status" value="1"/>
</dbReference>
<dbReference type="SMART" id="SM00465">
    <property type="entry name" value="GIYc"/>
    <property type="match status" value="1"/>
</dbReference>
<dbReference type="SUPFAM" id="SSF82771">
    <property type="entry name" value="GIY-YIG endonuclease"/>
    <property type="match status" value="1"/>
</dbReference>
<dbReference type="PROSITE" id="PS50164">
    <property type="entry name" value="GIY_YIG"/>
    <property type="match status" value="1"/>
</dbReference>
<proteinExistence type="inferred from homology"/>
<reference key="1">
    <citation type="submission" date="2007-11" db="EMBL/GenBank/DDBJ databases">
        <authorList>
            <consortium name="The Salmonella enterica serovar Paratyphi B Genome Sequencing Project"/>
            <person name="McClelland M."/>
            <person name="Sanderson E.K."/>
            <person name="Porwollik S."/>
            <person name="Spieth J."/>
            <person name="Clifton W.S."/>
            <person name="Fulton R."/>
            <person name="Cordes M."/>
            <person name="Wollam A."/>
            <person name="Shah N."/>
            <person name="Pepin K."/>
            <person name="Bhonagiri V."/>
            <person name="Nash W."/>
            <person name="Johnson M."/>
            <person name="Thiruvilangam P."/>
            <person name="Wilson R."/>
        </authorList>
    </citation>
    <scope>NUCLEOTIDE SEQUENCE [LARGE SCALE GENOMIC DNA]</scope>
    <source>
        <strain>ATCC BAA-1250 / SPB7</strain>
    </source>
</reference>
<accession>A9N717</accession>
<sequence length="100" mass="11454">MTPWYLYLIRTADNALYTGITTDVARRYRQHQTGKGAKALRGKGELTLAFAAQVGDRSLALRIEYRIKQLTKRQKERLVTEREAFEALLSSLQTPVLKND</sequence>
<gene>
    <name evidence="1" type="primary">yhbQ</name>
    <name type="ordered locus">SPAB_04081</name>
</gene>
<comment type="similarity">
    <text evidence="1">Belongs to the UPF0213 family.</text>
</comment>
<comment type="sequence caution" evidence="2">
    <conflict type="erroneous initiation">
        <sequence resource="EMBL-CDS" id="ABX69408"/>
    </conflict>
</comment>
<name>YHBQ_SALPB</name>
<evidence type="ECO:0000255" key="1">
    <source>
        <dbReference type="HAMAP-Rule" id="MF_01029"/>
    </source>
</evidence>
<evidence type="ECO:0000305" key="2"/>